<sequence length="953" mass="108171">MEKTYNPTSIEQDLYKTWEEQGYFKPHGDTSKDAYSIMIPPPNVTGSLHMGHAFQDTIMDTLIRCQRMKGKNTLWQVGTDHAGIATQMVVERKIAAEEGKTKHDYGRDAFIDKIWEWKAESGGTITKQLRRLGASVDWDRERFTMDDGFYKAVQEVFVRLYKDDLIYRGKRLVNWDPKLHTAISDLEVENKETKGHMWHFRYPLADGVKTADGKDYIVVATTRPETMLGDTGVAVNPEDPRYKDLIGKEIILPIVGRRIPIVGDEHADMEKGTGCVKITPAHDFNDYEVGKRHQLPMINILTFDANIRDAAEVFNSNGEASNAYGTEIPAKYQGMERFAARKAIVAEFEELGLLQEIKDHDLTVPYGDRGGVVIEPMLTDQWYVRAGILAKPAVEAVENGDIQFVPKQYENMYFSWMRDIQDWCISRQLWWGHRIPAWYDEQGNVFVGRNEEEVRAENNIAADVALRQDDDVLDTWFSSALWTFGTLGWPEKTPELKVFHPTDVLVTGFDIIFFWVARMIMMTMHFCKDEDGKAQVPFKTVYVTGLIRDENGDKMSKSKGNVLDPIDMIDGIDLESLVAKRTGNMMQPQLAAKIEKNTRKTFENGIEAYGTDSLRFTLAAMASTGRDINWDMKRLEGYRNFCNKLWNASRYVLMNTEEQDCGFAAGAELEYSLADKWIESQFELAAKEFNGHIDNFRLDMAANTLYEFIWNQFCDWYLELTKPVLWKGTEAQQRATRRTLITVLEKTLRLAHPVIPYITETIWQSVKPLVDGVEGDTIMLQALPQYDVANFNQEALDDIEWVKAFITSIRNLRAEYDINPGKPLEVMLKAANEQDAARIEANKPVLVSLAKLESIRVLADGEATPACATALVGKSELMIPMAGLIDKDAELDRLAKEIAKTQGEIARIEGKLGNEGFVAKAPEAVITKEREKLAGYQEALVKLEQQKATIAAL</sequence>
<dbReference type="EC" id="6.1.1.9" evidence="1"/>
<dbReference type="EMBL" id="AE003852">
    <property type="protein sequence ID" value="AAF95645.1"/>
    <property type="molecule type" value="Genomic_DNA"/>
</dbReference>
<dbReference type="PIR" id="E82068">
    <property type="entry name" value="E82068"/>
</dbReference>
<dbReference type="RefSeq" id="NP_232132.1">
    <property type="nucleotide sequence ID" value="NC_002505.1"/>
</dbReference>
<dbReference type="RefSeq" id="WP_000416450.1">
    <property type="nucleotide sequence ID" value="NZ_LT906614.1"/>
</dbReference>
<dbReference type="SMR" id="Q9KP73"/>
<dbReference type="STRING" id="243277.VC_2503"/>
<dbReference type="DNASU" id="2615167"/>
<dbReference type="EnsemblBacteria" id="AAF95645">
    <property type="protein sequence ID" value="AAF95645"/>
    <property type="gene ID" value="VC_2503"/>
</dbReference>
<dbReference type="KEGG" id="vch:VC_2503"/>
<dbReference type="PATRIC" id="fig|243277.26.peg.2384"/>
<dbReference type="eggNOG" id="COG0525">
    <property type="taxonomic scope" value="Bacteria"/>
</dbReference>
<dbReference type="HOGENOM" id="CLU_001493_0_2_6"/>
<dbReference type="Proteomes" id="UP000000584">
    <property type="component" value="Chromosome 1"/>
</dbReference>
<dbReference type="GO" id="GO:0005829">
    <property type="term" value="C:cytosol"/>
    <property type="evidence" value="ECO:0000318"/>
    <property type="project" value="GO_Central"/>
</dbReference>
<dbReference type="GO" id="GO:0002161">
    <property type="term" value="F:aminoacyl-tRNA deacylase activity"/>
    <property type="evidence" value="ECO:0007669"/>
    <property type="project" value="InterPro"/>
</dbReference>
<dbReference type="GO" id="GO:0005524">
    <property type="term" value="F:ATP binding"/>
    <property type="evidence" value="ECO:0007669"/>
    <property type="project" value="UniProtKB-UniRule"/>
</dbReference>
<dbReference type="GO" id="GO:0004832">
    <property type="term" value="F:valine-tRNA ligase activity"/>
    <property type="evidence" value="ECO:0000318"/>
    <property type="project" value="GO_Central"/>
</dbReference>
<dbReference type="GO" id="GO:0006438">
    <property type="term" value="P:valyl-tRNA aminoacylation"/>
    <property type="evidence" value="ECO:0000318"/>
    <property type="project" value="GO_Central"/>
</dbReference>
<dbReference type="CDD" id="cd07962">
    <property type="entry name" value="Anticodon_Ia_Val"/>
    <property type="match status" value="1"/>
</dbReference>
<dbReference type="CDD" id="cd00817">
    <property type="entry name" value="ValRS_core"/>
    <property type="match status" value="1"/>
</dbReference>
<dbReference type="FunFam" id="1.10.287.380:FF:000001">
    <property type="entry name" value="Valine--tRNA ligase"/>
    <property type="match status" value="1"/>
</dbReference>
<dbReference type="FunFam" id="1.10.730.10:FF:000007">
    <property type="entry name" value="Valine--tRNA ligase"/>
    <property type="match status" value="1"/>
</dbReference>
<dbReference type="FunFam" id="3.40.50.620:FF:000146">
    <property type="entry name" value="Valine--tRNA ligase"/>
    <property type="match status" value="1"/>
</dbReference>
<dbReference type="FunFam" id="3.90.740.10:FF:000003">
    <property type="entry name" value="Valine--tRNA ligase"/>
    <property type="match status" value="1"/>
</dbReference>
<dbReference type="FunFam" id="3.90.740.10:FF:000004">
    <property type="entry name" value="Valine--tRNA ligase"/>
    <property type="match status" value="1"/>
</dbReference>
<dbReference type="FunFam" id="3.40.50.620:FF:000020">
    <property type="entry name" value="Valine--tRNA ligase, mitochondrial"/>
    <property type="match status" value="1"/>
</dbReference>
<dbReference type="Gene3D" id="3.40.50.620">
    <property type="entry name" value="HUPs"/>
    <property type="match status" value="2"/>
</dbReference>
<dbReference type="Gene3D" id="1.10.730.10">
    <property type="entry name" value="Isoleucyl-tRNA Synthetase, Domain 1"/>
    <property type="match status" value="1"/>
</dbReference>
<dbReference type="Gene3D" id="1.10.287.380">
    <property type="entry name" value="Valyl-tRNA synthetase, C-terminal domain"/>
    <property type="match status" value="1"/>
</dbReference>
<dbReference type="Gene3D" id="3.90.740.10">
    <property type="entry name" value="Valyl/Leucyl/Isoleucyl-tRNA synthetase, editing domain"/>
    <property type="match status" value="1"/>
</dbReference>
<dbReference type="HAMAP" id="MF_02004">
    <property type="entry name" value="Val_tRNA_synth_type1"/>
    <property type="match status" value="1"/>
</dbReference>
<dbReference type="InterPro" id="IPR001412">
    <property type="entry name" value="aa-tRNA-synth_I_CS"/>
</dbReference>
<dbReference type="InterPro" id="IPR002300">
    <property type="entry name" value="aa-tRNA-synth_Ia"/>
</dbReference>
<dbReference type="InterPro" id="IPR033705">
    <property type="entry name" value="Anticodon_Ia_Val"/>
</dbReference>
<dbReference type="InterPro" id="IPR013155">
    <property type="entry name" value="M/V/L/I-tRNA-synth_anticd-bd"/>
</dbReference>
<dbReference type="InterPro" id="IPR014729">
    <property type="entry name" value="Rossmann-like_a/b/a_fold"/>
</dbReference>
<dbReference type="InterPro" id="IPR010978">
    <property type="entry name" value="tRNA-bd_arm"/>
</dbReference>
<dbReference type="InterPro" id="IPR009080">
    <property type="entry name" value="tRNAsynth_Ia_anticodon-bd"/>
</dbReference>
<dbReference type="InterPro" id="IPR037118">
    <property type="entry name" value="Val-tRNA_synth_C_sf"/>
</dbReference>
<dbReference type="InterPro" id="IPR019499">
    <property type="entry name" value="Val-tRNA_synth_tRNA-bd"/>
</dbReference>
<dbReference type="InterPro" id="IPR009008">
    <property type="entry name" value="Val/Leu/Ile-tRNA-synth_edit"/>
</dbReference>
<dbReference type="InterPro" id="IPR002303">
    <property type="entry name" value="Valyl-tRNA_ligase"/>
</dbReference>
<dbReference type="NCBIfam" id="NF004349">
    <property type="entry name" value="PRK05729.1"/>
    <property type="match status" value="1"/>
</dbReference>
<dbReference type="NCBIfam" id="TIGR00422">
    <property type="entry name" value="valS"/>
    <property type="match status" value="1"/>
</dbReference>
<dbReference type="PANTHER" id="PTHR11946:SF93">
    <property type="entry name" value="VALINE--TRNA LIGASE, CHLOROPLASTIC_MITOCHONDRIAL 2"/>
    <property type="match status" value="1"/>
</dbReference>
<dbReference type="PANTHER" id="PTHR11946">
    <property type="entry name" value="VALYL-TRNA SYNTHETASES"/>
    <property type="match status" value="1"/>
</dbReference>
<dbReference type="Pfam" id="PF08264">
    <property type="entry name" value="Anticodon_1"/>
    <property type="match status" value="1"/>
</dbReference>
<dbReference type="Pfam" id="PF00133">
    <property type="entry name" value="tRNA-synt_1"/>
    <property type="match status" value="1"/>
</dbReference>
<dbReference type="Pfam" id="PF10458">
    <property type="entry name" value="Val_tRNA-synt_C"/>
    <property type="match status" value="1"/>
</dbReference>
<dbReference type="PRINTS" id="PR00986">
    <property type="entry name" value="TRNASYNTHVAL"/>
</dbReference>
<dbReference type="SUPFAM" id="SSF47323">
    <property type="entry name" value="Anticodon-binding domain of a subclass of class I aminoacyl-tRNA synthetases"/>
    <property type="match status" value="1"/>
</dbReference>
<dbReference type="SUPFAM" id="SSF52374">
    <property type="entry name" value="Nucleotidylyl transferase"/>
    <property type="match status" value="1"/>
</dbReference>
<dbReference type="SUPFAM" id="SSF46589">
    <property type="entry name" value="tRNA-binding arm"/>
    <property type="match status" value="1"/>
</dbReference>
<dbReference type="SUPFAM" id="SSF50677">
    <property type="entry name" value="ValRS/IleRS/LeuRS editing domain"/>
    <property type="match status" value="1"/>
</dbReference>
<dbReference type="PROSITE" id="PS00178">
    <property type="entry name" value="AA_TRNA_LIGASE_I"/>
    <property type="match status" value="1"/>
</dbReference>
<evidence type="ECO:0000255" key="1">
    <source>
        <dbReference type="HAMAP-Rule" id="MF_02004"/>
    </source>
</evidence>
<feature type="chain" id="PRO_0000106243" description="Valine--tRNA ligase">
    <location>
        <begin position="1"/>
        <end position="953"/>
    </location>
</feature>
<feature type="coiled-coil region" evidence="1">
    <location>
        <begin position="884"/>
        <end position="952"/>
    </location>
</feature>
<feature type="short sequence motif" description="'HIGH' region">
    <location>
        <begin position="42"/>
        <end position="52"/>
    </location>
</feature>
<feature type="short sequence motif" description="'KMSKS' region">
    <location>
        <begin position="554"/>
        <end position="558"/>
    </location>
</feature>
<feature type="binding site" evidence="1">
    <location>
        <position position="557"/>
    </location>
    <ligand>
        <name>ATP</name>
        <dbReference type="ChEBI" id="CHEBI:30616"/>
    </ligand>
</feature>
<keyword id="KW-0030">Aminoacyl-tRNA synthetase</keyword>
<keyword id="KW-0067">ATP-binding</keyword>
<keyword id="KW-0175">Coiled coil</keyword>
<keyword id="KW-0963">Cytoplasm</keyword>
<keyword id="KW-0436">Ligase</keyword>
<keyword id="KW-0547">Nucleotide-binding</keyword>
<keyword id="KW-0648">Protein biosynthesis</keyword>
<keyword id="KW-1185">Reference proteome</keyword>
<accession>Q9KP73</accession>
<reference key="1">
    <citation type="journal article" date="2000" name="Nature">
        <title>DNA sequence of both chromosomes of the cholera pathogen Vibrio cholerae.</title>
        <authorList>
            <person name="Heidelberg J.F."/>
            <person name="Eisen J.A."/>
            <person name="Nelson W.C."/>
            <person name="Clayton R.A."/>
            <person name="Gwinn M.L."/>
            <person name="Dodson R.J."/>
            <person name="Haft D.H."/>
            <person name="Hickey E.K."/>
            <person name="Peterson J.D."/>
            <person name="Umayam L.A."/>
            <person name="Gill S.R."/>
            <person name="Nelson K.E."/>
            <person name="Read T.D."/>
            <person name="Tettelin H."/>
            <person name="Richardson D.L."/>
            <person name="Ermolaeva M.D."/>
            <person name="Vamathevan J.J."/>
            <person name="Bass S."/>
            <person name="Qin H."/>
            <person name="Dragoi I."/>
            <person name="Sellers P."/>
            <person name="McDonald L.A."/>
            <person name="Utterback T.R."/>
            <person name="Fleischmann R.D."/>
            <person name="Nierman W.C."/>
            <person name="White O."/>
            <person name="Salzberg S.L."/>
            <person name="Smith H.O."/>
            <person name="Colwell R.R."/>
            <person name="Mekalanos J.J."/>
            <person name="Venter J.C."/>
            <person name="Fraser C.M."/>
        </authorList>
    </citation>
    <scope>NUCLEOTIDE SEQUENCE [LARGE SCALE GENOMIC DNA]</scope>
    <source>
        <strain>ATCC 39315 / El Tor Inaba N16961</strain>
    </source>
</reference>
<gene>
    <name evidence="1" type="primary">valS</name>
    <name type="ordered locus">VC_2503</name>
</gene>
<protein>
    <recommendedName>
        <fullName evidence="1">Valine--tRNA ligase</fullName>
        <ecNumber evidence="1">6.1.1.9</ecNumber>
    </recommendedName>
    <alternativeName>
        <fullName evidence="1">Valyl-tRNA synthetase</fullName>
        <shortName evidence="1">ValRS</shortName>
    </alternativeName>
</protein>
<proteinExistence type="inferred from homology"/>
<comment type="function">
    <text evidence="1">Catalyzes the attachment of valine to tRNA(Val). As ValRS can inadvertently accommodate and process structurally similar amino acids such as threonine, to avoid such errors, it has a 'posttransfer' editing activity that hydrolyzes mischarged Thr-tRNA(Val) in a tRNA-dependent manner.</text>
</comment>
<comment type="catalytic activity">
    <reaction evidence="1">
        <text>tRNA(Val) + L-valine + ATP = L-valyl-tRNA(Val) + AMP + diphosphate</text>
        <dbReference type="Rhea" id="RHEA:10704"/>
        <dbReference type="Rhea" id="RHEA-COMP:9672"/>
        <dbReference type="Rhea" id="RHEA-COMP:9708"/>
        <dbReference type="ChEBI" id="CHEBI:30616"/>
        <dbReference type="ChEBI" id="CHEBI:33019"/>
        <dbReference type="ChEBI" id="CHEBI:57762"/>
        <dbReference type="ChEBI" id="CHEBI:78442"/>
        <dbReference type="ChEBI" id="CHEBI:78537"/>
        <dbReference type="ChEBI" id="CHEBI:456215"/>
        <dbReference type="EC" id="6.1.1.9"/>
    </reaction>
</comment>
<comment type="subunit">
    <text evidence="1">Monomer.</text>
</comment>
<comment type="subcellular location">
    <subcellularLocation>
        <location evidence="1">Cytoplasm</location>
    </subcellularLocation>
</comment>
<comment type="domain">
    <text evidence="1">ValRS has two distinct active sites: one for aminoacylation and one for editing. The misactivated threonine is translocated from the active site to the editing site.</text>
</comment>
<comment type="domain">
    <text evidence="1">The C-terminal coiled-coil domain is crucial for aminoacylation activity.</text>
</comment>
<comment type="similarity">
    <text evidence="1">Belongs to the class-I aminoacyl-tRNA synthetase family. ValS type 1 subfamily.</text>
</comment>
<name>SYV_VIBCH</name>
<organism>
    <name type="scientific">Vibrio cholerae serotype O1 (strain ATCC 39315 / El Tor Inaba N16961)</name>
    <dbReference type="NCBI Taxonomy" id="243277"/>
    <lineage>
        <taxon>Bacteria</taxon>
        <taxon>Pseudomonadati</taxon>
        <taxon>Pseudomonadota</taxon>
        <taxon>Gammaproteobacteria</taxon>
        <taxon>Vibrionales</taxon>
        <taxon>Vibrionaceae</taxon>
        <taxon>Vibrio</taxon>
    </lineage>
</organism>